<feature type="initiator methionine" description="Removed" evidence="13 14 15">
    <location>
        <position position="1"/>
    </location>
</feature>
<feature type="chain" id="PRO_0000142527" description="3'(2'),5'-bisphosphate nucleotidase 1">
    <location>
        <begin position="2"/>
        <end position="308"/>
    </location>
</feature>
<feature type="active site" description="Proton acceptor" evidence="2">
    <location>
        <position position="51"/>
    </location>
</feature>
<feature type="active site" description="Proton acceptor" evidence="2">
    <location>
        <position position="122"/>
    </location>
</feature>
<feature type="binding site" evidence="5 12">
    <location>
        <position position="74"/>
    </location>
    <ligand>
        <name>Mg(2+)</name>
        <dbReference type="ChEBI" id="CHEBI:18420"/>
        <label>1</label>
    </ligand>
</feature>
<feature type="binding site" evidence="5 12">
    <location>
        <position position="74"/>
    </location>
    <ligand>
        <name>Mg(2+)</name>
        <dbReference type="ChEBI" id="CHEBI:18420"/>
        <label>3</label>
    </ligand>
</feature>
<feature type="binding site" evidence="5 12">
    <location>
        <position position="117"/>
    </location>
    <ligand>
        <name>Mg(2+)</name>
        <dbReference type="ChEBI" id="CHEBI:18420"/>
        <label>1</label>
    </ligand>
</feature>
<feature type="binding site" evidence="5 12">
    <location>
        <position position="117"/>
    </location>
    <ligand>
        <name>Mg(2+)</name>
        <dbReference type="ChEBI" id="CHEBI:18420"/>
        <label>2</label>
    </ligand>
</feature>
<feature type="binding site" evidence="5 12">
    <location>
        <position position="119"/>
    </location>
    <ligand>
        <name>Mg(2+)</name>
        <dbReference type="ChEBI" id="CHEBI:18420"/>
        <label>1</label>
    </ligand>
</feature>
<feature type="binding site" evidence="5 12">
    <location>
        <position position="120"/>
    </location>
    <ligand>
        <name>Mg(2+)</name>
        <dbReference type="ChEBI" id="CHEBI:18420"/>
        <label>2</label>
    </ligand>
</feature>
<feature type="binding site" evidence="5 12">
    <location>
        <position position="195"/>
    </location>
    <ligand>
        <name>AMP</name>
        <dbReference type="ChEBI" id="CHEBI:456215"/>
    </ligand>
</feature>
<feature type="binding site" evidence="5 12">
    <location>
        <position position="198"/>
    </location>
    <ligand>
        <name>AMP</name>
        <dbReference type="ChEBI" id="CHEBI:456215"/>
    </ligand>
</feature>
<feature type="binding site" evidence="5 12">
    <location>
        <position position="220"/>
    </location>
    <ligand>
        <name>AMP</name>
        <dbReference type="ChEBI" id="CHEBI:456215"/>
    </ligand>
</feature>
<feature type="binding site" evidence="5 12">
    <location>
        <position position="224"/>
    </location>
    <ligand>
        <name>AMP</name>
        <dbReference type="ChEBI" id="CHEBI:456215"/>
    </ligand>
</feature>
<feature type="binding site" evidence="5 12">
    <location>
        <position position="247"/>
    </location>
    <ligand>
        <name>Mg(2+)</name>
        <dbReference type="ChEBI" id="CHEBI:18420"/>
        <label>2</label>
    </ligand>
</feature>
<feature type="modified residue" description="N-acetylalanine" evidence="13 14 15">
    <location>
        <position position="2"/>
    </location>
</feature>
<feature type="modified residue" description="Phosphothreonine" evidence="17">
    <location>
        <position position="122"/>
    </location>
</feature>
<feature type="modified residue" description="Phosphoserine" evidence="16">
    <location>
        <position position="240"/>
    </location>
</feature>
<feature type="modified residue" description="N6-succinyllysine" evidence="1">
    <location>
        <position position="244"/>
    </location>
</feature>
<feature type="splice variant" id="VSP_054807" description="In isoform 3." evidence="8">
    <location>
        <begin position="1"/>
        <end position="55"/>
    </location>
</feature>
<feature type="splice variant" id="VSP_054808" description="In isoform 4." evidence="8">
    <location>
        <begin position="76"/>
        <end position="111"/>
    </location>
</feature>
<feature type="splice variant" id="VSP_009937" description="In isoform 2." evidence="9">
    <original>KHMNSAGVLATLRNYDYYASRVPESIKNALVP</original>
    <variation>SHRTWPKPDFFRAQFFLESHSCFSRNFKNVSTPIKNIYDVIIYAYETDL</variation>
    <location>
        <begin position="277"/>
        <end position="308"/>
    </location>
</feature>
<feature type="sequence conflict" description="In Ref. 6; AAH17801." evidence="10" ref="6">
    <original>A</original>
    <variation>V</variation>
    <location>
        <position position="221"/>
    </location>
</feature>
<feature type="sequence conflict" description="In Ref. 2; CAB65115." evidence="10" ref="2">
    <original>G</original>
    <variation>S</variation>
    <location>
        <position position="260"/>
    </location>
</feature>
<feature type="helix" evidence="18">
    <location>
        <begin position="7"/>
        <end position="32"/>
    </location>
</feature>
<feature type="strand" evidence="18">
    <location>
        <begin position="38"/>
        <end position="42"/>
    </location>
</feature>
<feature type="strand" evidence="18">
    <location>
        <begin position="45"/>
        <end position="47"/>
    </location>
</feature>
<feature type="helix" evidence="18">
    <location>
        <begin position="49"/>
        <end position="65"/>
    </location>
</feature>
<feature type="strand" evidence="18">
    <location>
        <begin position="70"/>
        <end position="75"/>
    </location>
</feature>
<feature type="helix" evidence="18">
    <location>
        <begin position="84"/>
        <end position="86"/>
    </location>
</feature>
<feature type="helix" evidence="18">
    <location>
        <begin position="93"/>
        <end position="96"/>
    </location>
</feature>
<feature type="helix" evidence="18">
    <location>
        <begin position="102"/>
        <end position="104"/>
    </location>
</feature>
<feature type="helix" evidence="18">
    <location>
        <begin position="109"/>
        <end position="111"/>
    </location>
</feature>
<feature type="strand" evidence="18">
    <location>
        <begin position="112"/>
        <end position="120"/>
    </location>
</feature>
<feature type="helix" evidence="18">
    <location>
        <begin position="122"/>
        <end position="126"/>
    </location>
</feature>
<feature type="helix" evidence="18">
    <location>
        <begin position="130"/>
        <end position="132"/>
    </location>
</feature>
<feature type="strand" evidence="18">
    <location>
        <begin position="134"/>
        <end position="141"/>
    </location>
</feature>
<feature type="strand" evidence="18">
    <location>
        <begin position="144"/>
        <end position="152"/>
    </location>
</feature>
<feature type="turn" evidence="18">
    <location>
        <begin position="153"/>
        <end position="158"/>
    </location>
</feature>
<feature type="strand" evidence="18">
    <location>
        <begin position="167"/>
        <end position="172"/>
    </location>
</feature>
<feature type="turn" evidence="18">
    <location>
        <begin position="173"/>
        <end position="175"/>
    </location>
</feature>
<feature type="strand" evidence="18">
    <location>
        <begin position="176"/>
        <end position="180"/>
    </location>
</feature>
<feature type="strand" evidence="18">
    <location>
        <begin position="191"/>
        <end position="194"/>
    </location>
</feature>
<feature type="strand" evidence="18">
    <location>
        <begin position="196"/>
        <end position="198"/>
    </location>
</feature>
<feature type="helix" evidence="18">
    <location>
        <begin position="201"/>
        <end position="208"/>
    </location>
</feature>
<feature type="strand" evidence="18">
    <location>
        <begin position="213"/>
        <end position="217"/>
    </location>
</feature>
<feature type="helix" evidence="18">
    <location>
        <begin position="221"/>
        <end position="229"/>
    </location>
</feature>
<feature type="strand" evidence="18">
    <location>
        <begin position="234"/>
        <end position="238"/>
    </location>
</feature>
<feature type="helix" evidence="18">
    <location>
        <begin position="245"/>
        <end position="257"/>
    </location>
</feature>
<feature type="strand" evidence="18">
    <location>
        <begin position="261"/>
        <end position="263"/>
    </location>
</feature>
<feature type="strand" evidence="18">
    <location>
        <begin position="284"/>
        <end position="289"/>
    </location>
</feature>
<feature type="helix" evidence="18">
    <location>
        <begin position="291"/>
        <end position="295"/>
    </location>
</feature>
<feature type="helix" evidence="18">
    <location>
        <begin position="300"/>
        <end position="305"/>
    </location>
</feature>
<dbReference type="EC" id="3.1.3.7" evidence="4"/>
<dbReference type="EC" id="3.1.3.57" evidence="4"/>
<dbReference type="EMBL" id="AF125042">
    <property type="protein sequence ID" value="AAD17329.1"/>
    <property type="molecule type" value="mRNA"/>
</dbReference>
<dbReference type="EMBL" id="AJ249339">
    <property type="protein sequence ID" value="CAB65115.1"/>
    <property type="molecule type" value="mRNA"/>
</dbReference>
<dbReference type="EMBL" id="AK291943">
    <property type="protein sequence ID" value="BAF84632.1"/>
    <property type="molecule type" value="mRNA"/>
</dbReference>
<dbReference type="EMBL" id="AK298476">
    <property type="protein sequence ID" value="BAG60687.1"/>
    <property type="molecule type" value="mRNA"/>
</dbReference>
<dbReference type="EMBL" id="AK300777">
    <property type="protein sequence ID" value="BAG62441.1"/>
    <property type="molecule type" value="mRNA"/>
</dbReference>
<dbReference type="EMBL" id="AC103590">
    <property type="status" value="NOT_ANNOTATED_CDS"/>
    <property type="molecule type" value="Genomic_DNA"/>
</dbReference>
<dbReference type="EMBL" id="CH471100">
    <property type="protein sequence ID" value="EAW93306.1"/>
    <property type="molecule type" value="Genomic_DNA"/>
</dbReference>
<dbReference type="EMBL" id="CH471100">
    <property type="protein sequence ID" value="EAW93308.1"/>
    <property type="molecule type" value="Genomic_DNA"/>
</dbReference>
<dbReference type="EMBL" id="BC017801">
    <property type="protein sequence ID" value="AAH17801.1"/>
    <property type="molecule type" value="mRNA"/>
</dbReference>
<dbReference type="CCDS" id="CCDS41469.1">
    <molecule id="O95861-1"/>
</dbReference>
<dbReference type="CCDS" id="CCDS65787.1">
    <molecule id="O95861-3"/>
</dbReference>
<dbReference type="CCDS" id="CCDS65788.1">
    <molecule id="O95861-4"/>
</dbReference>
<dbReference type="RefSeq" id="NP_001273078.1">
    <molecule id="O95861-3"/>
    <property type="nucleotide sequence ID" value="NM_001286149.2"/>
</dbReference>
<dbReference type="RefSeq" id="NP_001273079.1">
    <molecule id="O95861-4"/>
    <property type="nucleotide sequence ID" value="NM_001286150.2"/>
</dbReference>
<dbReference type="RefSeq" id="NP_001273080.1">
    <molecule id="O95861-3"/>
    <property type="nucleotide sequence ID" value="NM_001286151.2"/>
</dbReference>
<dbReference type="RefSeq" id="NP_006076.4">
    <molecule id="O95861-1"/>
    <property type="nucleotide sequence ID" value="NM_006085.5"/>
</dbReference>
<dbReference type="RefSeq" id="XP_005273057.1">
    <molecule id="O95861-1"/>
    <property type="nucleotide sequence ID" value="XM_005273000.6"/>
</dbReference>
<dbReference type="RefSeq" id="XP_016855532.1">
    <molecule id="O95861-4"/>
    <property type="nucleotide sequence ID" value="XM_017000043.2"/>
</dbReference>
<dbReference type="RefSeq" id="XP_054189791.1">
    <molecule id="O95861-1"/>
    <property type="nucleotide sequence ID" value="XM_054333816.1"/>
</dbReference>
<dbReference type="RefSeq" id="XP_054189794.1">
    <molecule id="O95861-4"/>
    <property type="nucleotide sequence ID" value="XM_054333819.1"/>
</dbReference>
<dbReference type="PDB" id="2WEF">
    <property type="method" value="X-ray"/>
    <property type="resolution" value="1.80 A"/>
    <property type="chains" value="A=6-308"/>
</dbReference>
<dbReference type="PDBsum" id="2WEF"/>
<dbReference type="SMR" id="O95861"/>
<dbReference type="BioGRID" id="115653">
    <property type="interactions" value="97"/>
</dbReference>
<dbReference type="FunCoup" id="O95861">
    <property type="interactions" value="1056"/>
</dbReference>
<dbReference type="IntAct" id="O95861">
    <property type="interactions" value="72"/>
</dbReference>
<dbReference type="STRING" id="9606.ENSP00000446828"/>
<dbReference type="DEPOD" id="BPNT1"/>
<dbReference type="GlyGen" id="O95861">
    <property type="glycosylation" value="1 site, 1 O-linked glycan (1 site)"/>
</dbReference>
<dbReference type="iPTMnet" id="O95861"/>
<dbReference type="MetOSite" id="O95861"/>
<dbReference type="PhosphoSitePlus" id="O95861"/>
<dbReference type="SwissPalm" id="O95861"/>
<dbReference type="BioMuta" id="BPNT1"/>
<dbReference type="REPRODUCTION-2DPAGE" id="IPI00410214"/>
<dbReference type="jPOST" id="O95861"/>
<dbReference type="MassIVE" id="O95861"/>
<dbReference type="PaxDb" id="9606-ENSP00000446828"/>
<dbReference type="PeptideAtlas" id="O95861"/>
<dbReference type="ProteomicsDB" id="4810"/>
<dbReference type="ProteomicsDB" id="51094">
    <molecule id="O95861-1"/>
</dbReference>
<dbReference type="ProteomicsDB" id="51095">
    <molecule id="O95861-2"/>
</dbReference>
<dbReference type="ProteomicsDB" id="5212"/>
<dbReference type="Pumba" id="O95861"/>
<dbReference type="Antibodypedia" id="34625">
    <property type="antibodies" value="222 antibodies from 28 providers"/>
</dbReference>
<dbReference type="DNASU" id="10380"/>
<dbReference type="Ensembl" id="ENST00000322067.12">
    <molecule id="O95861-1"/>
    <property type="protein sequence ID" value="ENSP00000318852.7"/>
    <property type="gene ID" value="ENSG00000162813.18"/>
</dbReference>
<dbReference type="Ensembl" id="ENST00000414869.6">
    <molecule id="O95861-4"/>
    <property type="protein sequence ID" value="ENSP00000410348.2"/>
    <property type="gene ID" value="ENSG00000162813.18"/>
</dbReference>
<dbReference type="Ensembl" id="ENST00000469520.6">
    <molecule id="O95861-1"/>
    <property type="protein sequence ID" value="ENSP00000446828.1"/>
    <property type="gene ID" value="ENSG00000162813.18"/>
</dbReference>
<dbReference type="Ensembl" id="ENST00000544404.5">
    <molecule id="O95861-3"/>
    <property type="protein sequence ID" value="ENSP00000444398.1"/>
    <property type="gene ID" value="ENSG00000162813.18"/>
</dbReference>
<dbReference type="GeneID" id="10380"/>
<dbReference type="KEGG" id="hsa:10380"/>
<dbReference type="MANE-Select" id="ENST00000322067.12">
    <property type="protein sequence ID" value="ENSP00000318852.7"/>
    <property type="RefSeq nucleotide sequence ID" value="NM_006085.6"/>
    <property type="RefSeq protein sequence ID" value="NP_006076.4"/>
</dbReference>
<dbReference type="UCSC" id="uc010puh.3">
    <molecule id="O95861-1"/>
    <property type="organism name" value="human"/>
</dbReference>
<dbReference type="AGR" id="HGNC:1096"/>
<dbReference type="CTD" id="10380"/>
<dbReference type="DisGeNET" id="10380"/>
<dbReference type="GeneCards" id="BPNT1"/>
<dbReference type="HGNC" id="HGNC:1096">
    <property type="gene designation" value="BPNT1"/>
</dbReference>
<dbReference type="HPA" id="ENSG00000162813">
    <property type="expression patterns" value="Low tissue specificity"/>
</dbReference>
<dbReference type="MIM" id="604053">
    <property type="type" value="gene"/>
</dbReference>
<dbReference type="neXtProt" id="NX_O95861"/>
<dbReference type="OpenTargets" id="ENSG00000162813"/>
<dbReference type="PharmGKB" id="PA25407"/>
<dbReference type="VEuPathDB" id="HostDB:ENSG00000162813"/>
<dbReference type="eggNOG" id="KOG3099">
    <property type="taxonomic scope" value="Eukaryota"/>
</dbReference>
<dbReference type="GeneTree" id="ENSGT00940000157359"/>
<dbReference type="HOGENOM" id="CLU_034742_2_0_1"/>
<dbReference type="InParanoid" id="O95861"/>
<dbReference type="OMA" id="QTEADRC"/>
<dbReference type="OrthoDB" id="411145at2759"/>
<dbReference type="PAN-GO" id="O95861">
    <property type="GO annotations" value="1 GO annotation based on evolutionary models"/>
</dbReference>
<dbReference type="PhylomeDB" id="O95861"/>
<dbReference type="TreeFam" id="TF314300"/>
<dbReference type="BRENDA" id="3.1.3.7">
    <property type="organism ID" value="2681"/>
</dbReference>
<dbReference type="PathwayCommons" id="O95861"/>
<dbReference type="Reactome" id="R-HSA-156584">
    <property type="pathway name" value="Cytosolic sulfonation of small molecules"/>
</dbReference>
<dbReference type="SignaLink" id="O95861"/>
<dbReference type="BioGRID-ORCS" id="10380">
    <property type="hits" value="24 hits in 1169 CRISPR screens"/>
</dbReference>
<dbReference type="ChiTaRS" id="BPNT1">
    <property type="organism name" value="human"/>
</dbReference>
<dbReference type="EvolutionaryTrace" id="O95861"/>
<dbReference type="GenomeRNAi" id="10380"/>
<dbReference type="Pharos" id="O95861">
    <property type="development level" value="Tbio"/>
</dbReference>
<dbReference type="PRO" id="PR:O95861"/>
<dbReference type="Proteomes" id="UP000005640">
    <property type="component" value="Chromosome 1"/>
</dbReference>
<dbReference type="RNAct" id="O95861">
    <property type="molecule type" value="protein"/>
</dbReference>
<dbReference type="Bgee" id="ENSG00000162813">
    <property type="expression patterns" value="Expressed in islet of Langerhans and 169 other cell types or tissues"/>
</dbReference>
<dbReference type="ExpressionAtlas" id="O95861">
    <property type="expression patterns" value="baseline and differential"/>
</dbReference>
<dbReference type="GO" id="GO:0005829">
    <property type="term" value="C:cytosol"/>
    <property type="evidence" value="ECO:0000304"/>
    <property type="project" value="Reactome"/>
</dbReference>
<dbReference type="GO" id="GO:0005739">
    <property type="term" value="C:mitochondrion"/>
    <property type="evidence" value="ECO:0006056"/>
    <property type="project" value="FlyBase"/>
</dbReference>
<dbReference type="GO" id="GO:0008441">
    <property type="term" value="F:3'(2'),5'-bisphosphate nucleotidase activity"/>
    <property type="evidence" value="ECO:0000318"/>
    <property type="project" value="GO_Central"/>
</dbReference>
<dbReference type="GO" id="GO:0004441">
    <property type="term" value="F:inositol-1,4-bisphosphate 1-phosphatase activity"/>
    <property type="evidence" value="ECO:0007669"/>
    <property type="project" value="RHEA"/>
</dbReference>
<dbReference type="GO" id="GO:0046872">
    <property type="term" value="F:metal ion binding"/>
    <property type="evidence" value="ECO:0007669"/>
    <property type="project" value="UniProtKB-KW"/>
</dbReference>
<dbReference type="GO" id="GO:0050427">
    <property type="term" value="P:3'-phosphoadenosine 5'-phosphosulfate metabolic process"/>
    <property type="evidence" value="ECO:0000304"/>
    <property type="project" value="Reactome"/>
</dbReference>
<dbReference type="GO" id="GO:0007399">
    <property type="term" value="P:nervous system development"/>
    <property type="evidence" value="ECO:0000304"/>
    <property type="project" value="ProtInc"/>
</dbReference>
<dbReference type="GO" id="GO:0006139">
    <property type="term" value="P:nucleobase-containing compound metabolic process"/>
    <property type="evidence" value="ECO:0000304"/>
    <property type="project" value="ProtInc"/>
</dbReference>
<dbReference type="GO" id="GO:0046854">
    <property type="term" value="P:phosphatidylinositol phosphate biosynthetic process"/>
    <property type="evidence" value="ECO:0007669"/>
    <property type="project" value="InterPro"/>
</dbReference>
<dbReference type="CDD" id="cd01640">
    <property type="entry name" value="IPPase"/>
    <property type="match status" value="1"/>
</dbReference>
<dbReference type="FunFam" id="3.30.540.10:FF:000011">
    <property type="entry name" value="Bisphosphate nucleotidase 1"/>
    <property type="match status" value="1"/>
</dbReference>
<dbReference type="FunFam" id="3.40.190.80:FF:000006">
    <property type="entry name" value="Bisphosphate nucleotidase 1"/>
    <property type="match status" value="1"/>
</dbReference>
<dbReference type="Gene3D" id="3.40.190.80">
    <property type="match status" value="1"/>
</dbReference>
<dbReference type="Gene3D" id="3.30.540.10">
    <property type="entry name" value="Fructose-1,6-Bisphosphatase, subunit A, domain 1"/>
    <property type="match status" value="1"/>
</dbReference>
<dbReference type="InterPro" id="IPR050725">
    <property type="entry name" value="CysQ/Inositol_MonoPase"/>
</dbReference>
<dbReference type="InterPro" id="IPR020583">
    <property type="entry name" value="Inositol_monoP_metal-BS"/>
</dbReference>
<dbReference type="InterPro" id="IPR000760">
    <property type="entry name" value="Inositol_monophosphatase-like"/>
</dbReference>
<dbReference type="InterPro" id="IPR020550">
    <property type="entry name" value="Inositol_monophosphatase_CS"/>
</dbReference>
<dbReference type="PANTHER" id="PTHR43028">
    <property type="entry name" value="3'(2'),5'-BISPHOSPHATE NUCLEOTIDASE 1"/>
    <property type="match status" value="1"/>
</dbReference>
<dbReference type="PANTHER" id="PTHR43028:SF5">
    <property type="entry name" value="3'(2'),5'-BISPHOSPHATE NUCLEOTIDASE 1"/>
    <property type="match status" value="1"/>
</dbReference>
<dbReference type="Pfam" id="PF00459">
    <property type="entry name" value="Inositol_P"/>
    <property type="match status" value="1"/>
</dbReference>
<dbReference type="SUPFAM" id="SSF56655">
    <property type="entry name" value="Carbohydrate phosphatase"/>
    <property type="match status" value="1"/>
</dbReference>
<dbReference type="PROSITE" id="PS00629">
    <property type="entry name" value="IMP_1"/>
    <property type="match status" value="1"/>
</dbReference>
<dbReference type="PROSITE" id="PS00630">
    <property type="entry name" value="IMP_2"/>
    <property type="match status" value="1"/>
</dbReference>
<sequence>MASSNTVLMRLVASAYSIAQKAGMIVRRVIAEGDLGIVEKTCATDLQTKADRLAQMSICSSLARKFPKLTIIGEEDLPSEEVDQELIEDSQWEEILKQPCPSQYSAIKEEDLVVWVDPLDGTKEYTEGLLDNVTVLIGIAYEGKAIAGVINQPYYNYEAGPDAVLGRTIWGVLGLGAFGFQLKEVPAGKHIITTTRSHSNKLVTDCVAAMNPDAVLRVGGAGNKIIQLIEGKASAYVFASPGCKKWDTCAPEVILHAVGGKLTDIHGNVLQYHKDVKHMNSAGVLATLRNYDYYASRVPESIKNALVP</sequence>
<protein>
    <recommendedName>
        <fullName>3'(2'),5'-bisphosphate nucleotidase 1</fullName>
        <ecNumber evidence="4">3.1.3.7</ecNumber>
    </recommendedName>
    <alternativeName>
        <fullName evidence="7">3'-phosphoadenosine 5'-phosphate phosphatase</fullName>
        <shortName evidence="7">PAP phosphatase</shortName>
    </alternativeName>
    <alternativeName>
        <fullName evidence="6">Bisphosphate 3'-nucleotidase 1</fullName>
        <shortName evidence="6">BPntase 1</shortName>
    </alternativeName>
    <alternativeName>
        <fullName evidence="7">HsPIP</fullName>
    </alternativeName>
    <alternativeName>
        <fullName evidence="7">Inositol-polyphosphate 1-phosphatase</fullName>
        <ecNumber evidence="4">3.1.3.57</ecNumber>
    </alternativeName>
</protein>
<keyword id="KW-0002">3D-structure</keyword>
<keyword id="KW-0007">Acetylation</keyword>
<keyword id="KW-0025">Alternative splicing</keyword>
<keyword id="KW-0378">Hydrolase</keyword>
<keyword id="KW-0452">Lithium</keyword>
<keyword id="KW-0460">Magnesium</keyword>
<keyword id="KW-0479">Metal-binding</keyword>
<keyword id="KW-0597">Phosphoprotein</keyword>
<keyword id="KW-1267">Proteomics identification</keyword>
<keyword id="KW-1185">Reference proteome</keyword>
<reference key="1">
    <citation type="journal article" date="1999" name="J. Biol. Chem.">
        <title>Cloning and characterization of a mammalian lithium-sensitive bisphosphate 3'-nucleotidase inhibited by inositol 1,4-bisphosphate.</title>
        <authorList>
            <person name="Spiegelberg B.D."/>
            <person name="Xiong J.-P."/>
            <person name="Smith J.J."/>
            <person name="Gu R.F."/>
            <person name="York J.D."/>
        </authorList>
    </citation>
    <scope>NUCLEOTIDE SEQUENCE [MRNA] (ISOFORM 1)</scope>
    <scope>TISSUE SPECIFICITY</scope>
</reference>
<reference key="2">
    <citation type="journal article" date="2000" name="FEBS Lett.">
        <title>A novel target of lithium therapy.</title>
        <authorList>
            <person name="Yenush L."/>
            <person name="Belles J.M."/>
            <person name="Lopez-Coronado J.M."/>
            <person name="Gil-Mascarell R."/>
            <person name="Serrano R."/>
            <person name="Rodriguez P.L."/>
        </authorList>
    </citation>
    <scope>NUCLEOTIDE SEQUENCE [MRNA] (ISOFORM 1)</scope>
    <scope>FUNCTION</scope>
    <scope>CATALYTIC ACTIVITY</scope>
    <scope>COFACTOR</scope>
    <scope>SUBSTRATE SPECIFICITY</scope>
    <scope>BIOPHYSICOCHEMICAL PROPERTIES</scope>
    <scope>ACTIVITY REGULATION</scope>
    <source>
        <tissue>B-cell</tissue>
    </source>
</reference>
<reference key="3">
    <citation type="journal article" date="2004" name="Nat. Genet.">
        <title>Complete sequencing and characterization of 21,243 full-length human cDNAs.</title>
        <authorList>
            <person name="Ota T."/>
            <person name="Suzuki Y."/>
            <person name="Nishikawa T."/>
            <person name="Otsuki T."/>
            <person name="Sugiyama T."/>
            <person name="Irie R."/>
            <person name="Wakamatsu A."/>
            <person name="Hayashi K."/>
            <person name="Sato H."/>
            <person name="Nagai K."/>
            <person name="Kimura K."/>
            <person name="Makita H."/>
            <person name="Sekine M."/>
            <person name="Obayashi M."/>
            <person name="Nishi T."/>
            <person name="Shibahara T."/>
            <person name="Tanaka T."/>
            <person name="Ishii S."/>
            <person name="Yamamoto J."/>
            <person name="Saito K."/>
            <person name="Kawai Y."/>
            <person name="Isono Y."/>
            <person name="Nakamura Y."/>
            <person name="Nagahari K."/>
            <person name="Murakami K."/>
            <person name="Yasuda T."/>
            <person name="Iwayanagi T."/>
            <person name="Wagatsuma M."/>
            <person name="Shiratori A."/>
            <person name="Sudo H."/>
            <person name="Hosoiri T."/>
            <person name="Kaku Y."/>
            <person name="Kodaira H."/>
            <person name="Kondo H."/>
            <person name="Sugawara M."/>
            <person name="Takahashi M."/>
            <person name="Kanda K."/>
            <person name="Yokoi T."/>
            <person name="Furuya T."/>
            <person name="Kikkawa E."/>
            <person name="Omura Y."/>
            <person name="Abe K."/>
            <person name="Kamihara K."/>
            <person name="Katsuta N."/>
            <person name="Sato K."/>
            <person name="Tanikawa M."/>
            <person name="Yamazaki M."/>
            <person name="Ninomiya K."/>
            <person name="Ishibashi T."/>
            <person name="Yamashita H."/>
            <person name="Murakawa K."/>
            <person name="Fujimori K."/>
            <person name="Tanai H."/>
            <person name="Kimata M."/>
            <person name="Watanabe M."/>
            <person name="Hiraoka S."/>
            <person name="Chiba Y."/>
            <person name="Ishida S."/>
            <person name="Ono Y."/>
            <person name="Takiguchi S."/>
            <person name="Watanabe S."/>
            <person name="Yosida M."/>
            <person name="Hotuta T."/>
            <person name="Kusano J."/>
            <person name="Kanehori K."/>
            <person name="Takahashi-Fujii A."/>
            <person name="Hara H."/>
            <person name="Tanase T.-O."/>
            <person name="Nomura Y."/>
            <person name="Togiya S."/>
            <person name="Komai F."/>
            <person name="Hara R."/>
            <person name="Takeuchi K."/>
            <person name="Arita M."/>
            <person name="Imose N."/>
            <person name="Musashino K."/>
            <person name="Yuuki H."/>
            <person name="Oshima A."/>
            <person name="Sasaki N."/>
            <person name="Aotsuka S."/>
            <person name="Yoshikawa Y."/>
            <person name="Matsunawa H."/>
            <person name="Ichihara T."/>
            <person name="Shiohata N."/>
            <person name="Sano S."/>
            <person name="Moriya S."/>
            <person name="Momiyama H."/>
            <person name="Satoh N."/>
            <person name="Takami S."/>
            <person name="Terashima Y."/>
            <person name="Suzuki O."/>
            <person name="Nakagawa S."/>
            <person name="Senoh A."/>
            <person name="Mizoguchi H."/>
            <person name="Goto Y."/>
            <person name="Shimizu F."/>
            <person name="Wakebe H."/>
            <person name="Hishigaki H."/>
            <person name="Watanabe T."/>
            <person name="Sugiyama A."/>
            <person name="Takemoto M."/>
            <person name="Kawakami B."/>
            <person name="Yamazaki M."/>
            <person name="Watanabe K."/>
            <person name="Kumagai A."/>
            <person name="Itakura S."/>
            <person name="Fukuzumi Y."/>
            <person name="Fujimori Y."/>
            <person name="Komiyama M."/>
            <person name="Tashiro H."/>
            <person name="Tanigami A."/>
            <person name="Fujiwara T."/>
            <person name="Ono T."/>
            <person name="Yamada K."/>
            <person name="Fujii Y."/>
            <person name="Ozaki K."/>
            <person name="Hirao M."/>
            <person name="Ohmori Y."/>
            <person name="Kawabata A."/>
            <person name="Hikiji T."/>
            <person name="Kobatake N."/>
            <person name="Inagaki H."/>
            <person name="Ikema Y."/>
            <person name="Okamoto S."/>
            <person name="Okitani R."/>
            <person name="Kawakami T."/>
            <person name="Noguchi S."/>
            <person name="Itoh T."/>
            <person name="Shigeta K."/>
            <person name="Senba T."/>
            <person name="Matsumura K."/>
            <person name="Nakajima Y."/>
            <person name="Mizuno T."/>
            <person name="Morinaga M."/>
            <person name="Sasaki M."/>
            <person name="Togashi T."/>
            <person name="Oyama M."/>
            <person name="Hata H."/>
            <person name="Watanabe M."/>
            <person name="Komatsu T."/>
            <person name="Mizushima-Sugano J."/>
            <person name="Satoh T."/>
            <person name="Shirai Y."/>
            <person name="Takahashi Y."/>
            <person name="Nakagawa K."/>
            <person name="Okumura K."/>
            <person name="Nagase T."/>
            <person name="Nomura N."/>
            <person name="Kikuchi H."/>
            <person name="Masuho Y."/>
            <person name="Yamashita R."/>
            <person name="Nakai K."/>
            <person name="Yada T."/>
            <person name="Nakamura Y."/>
            <person name="Ohara O."/>
            <person name="Isogai T."/>
            <person name="Sugano S."/>
        </authorList>
    </citation>
    <scope>NUCLEOTIDE SEQUENCE [LARGE SCALE MRNA] (ISOFORMS 1; 3 AND 4)</scope>
</reference>
<reference key="4">
    <citation type="journal article" date="2006" name="Nature">
        <title>The DNA sequence and biological annotation of human chromosome 1.</title>
        <authorList>
            <person name="Gregory S.G."/>
            <person name="Barlow K.F."/>
            <person name="McLay K.E."/>
            <person name="Kaul R."/>
            <person name="Swarbreck D."/>
            <person name="Dunham A."/>
            <person name="Scott C.E."/>
            <person name="Howe K.L."/>
            <person name="Woodfine K."/>
            <person name="Spencer C.C.A."/>
            <person name="Jones M.C."/>
            <person name="Gillson C."/>
            <person name="Searle S."/>
            <person name="Zhou Y."/>
            <person name="Kokocinski F."/>
            <person name="McDonald L."/>
            <person name="Evans R."/>
            <person name="Phillips K."/>
            <person name="Atkinson A."/>
            <person name="Cooper R."/>
            <person name="Jones C."/>
            <person name="Hall R.E."/>
            <person name="Andrews T.D."/>
            <person name="Lloyd C."/>
            <person name="Ainscough R."/>
            <person name="Almeida J.P."/>
            <person name="Ambrose K.D."/>
            <person name="Anderson F."/>
            <person name="Andrew R.W."/>
            <person name="Ashwell R.I.S."/>
            <person name="Aubin K."/>
            <person name="Babbage A.K."/>
            <person name="Bagguley C.L."/>
            <person name="Bailey J."/>
            <person name="Beasley H."/>
            <person name="Bethel G."/>
            <person name="Bird C.P."/>
            <person name="Bray-Allen S."/>
            <person name="Brown J.Y."/>
            <person name="Brown A.J."/>
            <person name="Buckley D."/>
            <person name="Burton J."/>
            <person name="Bye J."/>
            <person name="Carder C."/>
            <person name="Chapman J.C."/>
            <person name="Clark S.Y."/>
            <person name="Clarke G."/>
            <person name="Clee C."/>
            <person name="Cobley V."/>
            <person name="Collier R.E."/>
            <person name="Corby N."/>
            <person name="Coville G.J."/>
            <person name="Davies J."/>
            <person name="Deadman R."/>
            <person name="Dunn M."/>
            <person name="Earthrowl M."/>
            <person name="Ellington A.G."/>
            <person name="Errington H."/>
            <person name="Frankish A."/>
            <person name="Frankland J."/>
            <person name="French L."/>
            <person name="Garner P."/>
            <person name="Garnett J."/>
            <person name="Gay L."/>
            <person name="Ghori M.R.J."/>
            <person name="Gibson R."/>
            <person name="Gilby L.M."/>
            <person name="Gillett W."/>
            <person name="Glithero R.J."/>
            <person name="Grafham D.V."/>
            <person name="Griffiths C."/>
            <person name="Griffiths-Jones S."/>
            <person name="Grocock R."/>
            <person name="Hammond S."/>
            <person name="Harrison E.S.I."/>
            <person name="Hart E."/>
            <person name="Haugen E."/>
            <person name="Heath P.D."/>
            <person name="Holmes S."/>
            <person name="Holt K."/>
            <person name="Howden P.J."/>
            <person name="Hunt A.R."/>
            <person name="Hunt S.E."/>
            <person name="Hunter G."/>
            <person name="Isherwood J."/>
            <person name="James R."/>
            <person name="Johnson C."/>
            <person name="Johnson D."/>
            <person name="Joy A."/>
            <person name="Kay M."/>
            <person name="Kershaw J.K."/>
            <person name="Kibukawa M."/>
            <person name="Kimberley A.M."/>
            <person name="King A."/>
            <person name="Knights A.J."/>
            <person name="Lad H."/>
            <person name="Laird G."/>
            <person name="Lawlor S."/>
            <person name="Leongamornlert D.A."/>
            <person name="Lloyd D.M."/>
            <person name="Loveland J."/>
            <person name="Lovell J."/>
            <person name="Lush M.J."/>
            <person name="Lyne R."/>
            <person name="Martin S."/>
            <person name="Mashreghi-Mohammadi M."/>
            <person name="Matthews L."/>
            <person name="Matthews N.S.W."/>
            <person name="McLaren S."/>
            <person name="Milne S."/>
            <person name="Mistry S."/>
            <person name="Moore M.J.F."/>
            <person name="Nickerson T."/>
            <person name="O'Dell C.N."/>
            <person name="Oliver K."/>
            <person name="Palmeiri A."/>
            <person name="Palmer S.A."/>
            <person name="Parker A."/>
            <person name="Patel D."/>
            <person name="Pearce A.V."/>
            <person name="Peck A.I."/>
            <person name="Pelan S."/>
            <person name="Phelps K."/>
            <person name="Phillimore B.J."/>
            <person name="Plumb R."/>
            <person name="Rajan J."/>
            <person name="Raymond C."/>
            <person name="Rouse G."/>
            <person name="Saenphimmachak C."/>
            <person name="Sehra H.K."/>
            <person name="Sheridan E."/>
            <person name="Shownkeen R."/>
            <person name="Sims S."/>
            <person name="Skuce C.D."/>
            <person name="Smith M."/>
            <person name="Steward C."/>
            <person name="Subramanian S."/>
            <person name="Sycamore N."/>
            <person name="Tracey A."/>
            <person name="Tromans A."/>
            <person name="Van Helmond Z."/>
            <person name="Wall M."/>
            <person name="Wallis J.M."/>
            <person name="White S."/>
            <person name="Whitehead S.L."/>
            <person name="Wilkinson J.E."/>
            <person name="Willey D.L."/>
            <person name="Williams H."/>
            <person name="Wilming L."/>
            <person name="Wray P.W."/>
            <person name="Wu Z."/>
            <person name="Coulson A."/>
            <person name="Vaudin M."/>
            <person name="Sulston J.E."/>
            <person name="Durbin R.M."/>
            <person name="Hubbard T."/>
            <person name="Wooster R."/>
            <person name="Dunham I."/>
            <person name="Carter N.P."/>
            <person name="McVean G."/>
            <person name="Ross M.T."/>
            <person name="Harrow J."/>
            <person name="Olson M.V."/>
            <person name="Beck S."/>
            <person name="Rogers J."/>
            <person name="Bentley D.R."/>
        </authorList>
    </citation>
    <scope>NUCLEOTIDE SEQUENCE [LARGE SCALE GENOMIC DNA]</scope>
</reference>
<reference key="5">
    <citation type="submission" date="2005-09" db="EMBL/GenBank/DDBJ databases">
        <authorList>
            <person name="Mural R.J."/>
            <person name="Istrail S."/>
            <person name="Sutton G.G."/>
            <person name="Florea L."/>
            <person name="Halpern A.L."/>
            <person name="Mobarry C.M."/>
            <person name="Lippert R."/>
            <person name="Walenz B."/>
            <person name="Shatkay H."/>
            <person name="Dew I."/>
            <person name="Miller J.R."/>
            <person name="Flanigan M.J."/>
            <person name="Edwards N.J."/>
            <person name="Bolanos R."/>
            <person name="Fasulo D."/>
            <person name="Halldorsson B.V."/>
            <person name="Hannenhalli S."/>
            <person name="Turner R."/>
            <person name="Yooseph S."/>
            <person name="Lu F."/>
            <person name="Nusskern D.R."/>
            <person name="Shue B.C."/>
            <person name="Zheng X.H."/>
            <person name="Zhong F."/>
            <person name="Delcher A.L."/>
            <person name="Huson D.H."/>
            <person name="Kravitz S.A."/>
            <person name="Mouchard L."/>
            <person name="Reinert K."/>
            <person name="Remington K.A."/>
            <person name="Clark A.G."/>
            <person name="Waterman M.S."/>
            <person name="Eichler E.E."/>
            <person name="Adams M.D."/>
            <person name="Hunkapiller M.W."/>
            <person name="Myers E.W."/>
            <person name="Venter J.C."/>
        </authorList>
    </citation>
    <scope>NUCLEOTIDE SEQUENCE [LARGE SCALE GENOMIC DNA]</scope>
</reference>
<reference key="6">
    <citation type="journal article" date="2004" name="Genome Res.">
        <title>The status, quality, and expansion of the NIH full-length cDNA project: the Mammalian Gene Collection (MGC).</title>
        <authorList>
            <consortium name="The MGC Project Team"/>
        </authorList>
    </citation>
    <scope>NUCLEOTIDE SEQUENCE [LARGE SCALE MRNA] (ISOFORM 2)</scope>
    <source>
        <tissue>Skeletal muscle</tissue>
    </source>
</reference>
<reference key="7">
    <citation type="journal article" date="2009" name="Anal. Chem.">
        <title>Lys-N and trypsin cover complementary parts of the phosphoproteome in a refined SCX-based approach.</title>
        <authorList>
            <person name="Gauci S."/>
            <person name="Helbig A.O."/>
            <person name="Slijper M."/>
            <person name="Krijgsveld J."/>
            <person name="Heck A.J."/>
            <person name="Mohammed S."/>
        </authorList>
    </citation>
    <scope>ACETYLATION [LARGE SCALE ANALYSIS] AT ALA-2</scope>
    <scope>CLEAVAGE OF INITIATOR METHIONINE [LARGE SCALE ANALYSIS]</scope>
    <scope>IDENTIFICATION BY MASS SPECTROMETRY [LARGE SCALE ANALYSIS]</scope>
</reference>
<reference key="8">
    <citation type="journal article" date="2011" name="BMC Syst. Biol.">
        <title>Initial characterization of the human central proteome.</title>
        <authorList>
            <person name="Burkard T.R."/>
            <person name="Planyavsky M."/>
            <person name="Kaupe I."/>
            <person name="Breitwieser F.P."/>
            <person name="Buerckstuemmer T."/>
            <person name="Bennett K.L."/>
            <person name="Superti-Furga G."/>
            <person name="Colinge J."/>
        </authorList>
    </citation>
    <scope>IDENTIFICATION BY MASS SPECTROMETRY [LARGE SCALE ANALYSIS]</scope>
</reference>
<reference key="9">
    <citation type="journal article" date="2012" name="Mol. Cell. Proteomics">
        <title>Comparative large-scale characterisation of plant vs. mammal proteins reveals similar and idiosyncratic N-alpha acetylation features.</title>
        <authorList>
            <person name="Bienvenut W.V."/>
            <person name="Sumpton D."/>
            <person name="Martinez A."/>
            <person name="Lilla S."/>
            <person name="Espagne C."/>
            <person name="Meinnel T."/>
            <person name="Giglione C."/>
        </authorList>
    </citation>
    <scope>ACETYLATION [LARGE SCALE ANALYSIS] AT ALA-2</scope>
    <scope>CLEAVAGE OF INITIATOR METHIONINE [LARGE SCALE ANALYSIS]</scope>
    <scope>IDENTIFICATION BY MASS SPECTROMETRY [LARGE SCALE ANALYSIS]</scope>
</reference>
<reference key="10">
    <citation type="journal article" date="2012" name="Proc. Natl. Acad. Sci. U.S.A.">
        <title>N-terminal acetylome analyses and functional insights of the N-terminal acetyltransferase NatB.</title>
        <authorList>
            <person name="Van Damme P."/>
            <person name="Lasa M."/>
            <person name="Polevoda B."/>
            <person name="Gazquez C."/>
            <person name="Elosegui-Artola A."/>
            <person name="Kim D.S."/>
            <person name="De Juan-Pardo E."/>
            <person name="Demeyer K."/>
            <person name="Hole K."/>
            <person name="Larrea E."/>
            <person name="Timmerman E."/>
            <person name="Prieto J."/>
            <person name="Arnesen T."/>
            <person name="Sherman F."/>
            <person name="Gevaert K."/>
            <person name="Aldabe R."/>
        </authorList>
    </citation>
    <scope>ACETYLATION [LARGE SCALE ANALYSIS] AT ALA-2</scope>
    <scope>CLEAVAGE OF INITIATOR METHIONINE [LARGE SCALE ANALYSIS]</scope>
    <scope>IDENTIFICATION BY MASS SPECTROMETRY [LARGE SCALE ANALYSIS]</scope>
</reference>
<reference key="11">
    <citation type="journal article" date="2013" name="J. Proteome Res.">
        <title>Toward a comprehensive characterization of a human cancer cell phosphoproteome.</title>
        <authorList>
            <person name="Zhou H."/>
            <person name="Di Palma S."/>
            <person name="Preisinger C."/>
            <person name="Peng M."/>
            <person name="Polat A.N."/>
            <person name="Heck A.J."/>
            <person name="Mohammed S."/>
        </authorList>
    </citation>
    <scope>PHOSPHORYLATION [LARGE SCALE ANALYSIS] AT SER-240</scope>
    <scope>IDENTIFICATION BY MASS SPECTROMETRY [LARGE SCALE ANALYSIS]</scope>
    <source>
        <tissue>Erythroleukemia</tissue>
    </source>
</reference>
<reference key="12">
    <citation type="journal article" date="2014" name="J. Proteomics">
        <title>An enzyme assisted RP-RPLC approach for in-depth analysis of human liver phosphoproteome.</title>
        <authorList>
            <person name="Bian Y."/>
            <person name="Song C."/>
            <person name="Cheng K."/>
            <person name="Dong M."/>
            <person name="Wang F."/>
            <person name="Huang J."/>
            <person name="Sun D."/>
            <person name="Wang L."/>
            <person name="Ye M."/>
            <person name="Zou H."/>
        </authorList>
    </citation>
    <scope>PHOSPHORYLATION [LARGE SCALE ANALYSIS] AT THR-122</scope>
    <scope>IDENTIFICATION BY MASS SPECTROMETRY [LARGE SCALE ANALYSIS]</scope>
    <source>
        <tissue>Liver</tissue>
    </source>
</reference>
<reference key="13">
    <citation type="journal article" date="2015" name="Proteomics">
        <title>N-terminome analysis of the human mitochondrial proteome.</title>
        <authorList>
            <person name="Vaca Jacome A.S."/>
            <person name="Rabilloud T."/>
            <person name="Schaeffer-Reiss C."/>
            <person name="Rompais M."/>
            <person name="Ayoub D."/>
            <person name="Lane L."/>
            <person name="Bairoch A."/>
            <person name="Van Dorsselaer A."/>
            <person name="Carapito C."/>
        </authorList>
    </citation>
    <scope>IDENTIFICATION BY MASS SPECTROMETRY [LARGE SCALE ANALYSIS]</scope>
</reference>
<reference evidence="12" key="14">
    <citation type="submission" date="2009-04" db="PDB data bank">
        <title>Human 3'(2'), 5'-bisphosphate nucleotidase 1 (BPNT1) in complex with AMP, PO4 and magnesium.</title>
        <authorList>
            <consortium name="Structural genomics consortium (SGC)"/>
        </authorList>
    </citation>
    <scope>X-RAY CRYSTALLOGRAPHY (1.8 ANGSTROMS) OF 6-308 IN COMPLEX WITH AMP; MG(2+) AND PHOSPHATE</scope>
</reference>
<evidence type="ECO:0000250" key="1">
    <source>
        <dbReference type="UniProtKB" id="Q9Z0S1"/>
    </source>
</evidence>
<evidence type="ECO:0000250" key="2">
    <source>
        <dbReference type="UniProtKB" id="Q9Z1N4"/>
    </source>
</evidence>
<evidence type="ECO:0000269" key="3">
    <source>
    </source>
</evidence>
<evidence type="ECO:0000269" key="4">
    <source>
    </source>
</evidence>
<evidence type="ECO:0000269" key="5">
    <source ref="14"/>
</evidence>
<evidence type="ECO:0000303" key="6">
    <source>
    </source>
</evidence>
<evidence type="ECO:0000303" key="7">
    <source>
    </source>
</evidence>
<evidence type="ECO:0000303" key="8">
    <source>
    </source>
</evidence>
<evidence type="ECO:0000303" key="9">
    <source>
    </source>
</evidence>
<evidence type="ECO:0000305" key="10"/>
<evidence type="ECO:0000305" key="11">
    <source>
    </source>
</evidence>
<evidence type="ECO:0007744" key="12">
    <source>
        <dbReference type="PDB" id="2WEF"/>
    </source>
</evidence>
<evidence type="ECO:0007744" key="13">
    <source>
    </source>
</evidence>
<evidence type="ECO:0007744" key="14">
    <source>
    </source>
</evidence>
<evidence type="ECO:0007744" key="15">
    <source>
    </source>
</evidence>
<evidence type="ECO:0007744" key="16">
    <source>
    </source>
</evidence>
<evidence type="ECO:0007744" key="17">
    <source>
    </source>
</evidence>
<evidence type="ECO:0007829" key="18">
    <source>
        <dbReference type="PDB" id="2WEF"/>
    </source>
</evidence>
<organism>
    <name type="scientific">Homo sapiens</name>
    <name type="common">Human</name>
    <dbReference type="NCBI Taxonomy" id="9606"/>
    <lineage>
        <taxon>Eukaryota</taxon>
        <taxon>Metazoa</taxon>
        <taxon>Chordata</taxon>
        <taxon>Craniata</taxon>
        <taxon>Vertebrata</taxon>
        <taxon>Euteleostomi</taxon>
        <taxon>Mammalia</taxon>
        <taxon>Eutheria</taxon>
        <taxon>Euarchontoglires</taxon>
        <taxon>Primates</taxon>
        <taxon>Haplorrhini</taxon>
        <taxon>Catarrhini</taxon>
        <taxon>Hominidae</taxon>
        <taxon>Homo</taxon>
    </lineage>
</organism>
<proteinExistence type="evidence at protein level"/>
<name>BPNT1_HUMAN</name>
<comment type="function">
    <text evidence="2 4">Phosphatase that converts 3'(2')-phosphoadenosine 5'-phosphate (PAP) to AMP and inositol 1,4-bisphosphate (Ins(1,4)P2) to inositol 4-phosphate (PubMed:10675562). Is also able to hydrolyze adenosine 3'-phosphate 5'-phosphosulfate (PAPS) to adenosine 5'-phosphosulfate (APS) (By similarity). Probably prevents the toxic accumulation of PAP, a compound which inhibits a variety of proteins, including PAPS-utilizing enzymes such as sulfotransferases, and RNA processing enzymes. Could also play a role in inositol recycling and phosphoinositide metabolism. Is not active on 3'-AMP, inositol-1-phosphate and inositol-1,4,5-triphosphate (PubMed:10675562).</text>
</comment>
<comment type="catalytic activity">
    <reaction evidence="4">
        <text>adenosine 3',5'-bisphosphate + H2O = AMP + phosphate</text>
        <dbReference type="Rhea" id="RHEA:10040"/>
        <dbReference type="ChEBI" id="CHEBI:15377"/>
        <dbReference type="ChEBI" id="CHEBI:43474"/>
        <dbReference type="ChEBI" id="CHEBI:58343"/>
        <dbReference type="ChEBI" id="CHEBI:456215"/>
        <dbReference type="EC" id="3.1.3.7"/>
    </reaction>
    <physiologicalReaction direction="left-to-right" evidence="11">
        <dbReference type="Rhea" id="RHEA:10041"/>
    </physiologicalReaction>
</comment>
<comment type="catalytic activity">
    <reaction evidence="4">
        <text>adenosine 2',5'-bisphosphate + H2O = AMP + phosphate</text>
        <dbReference type="Rhea" id="RHEA:77643"/>
        <dbReference type="ChEBI" id="CHEBI:15377"/>
        <dbReference type="ChEBI" id="CHEBI:43474"/>
        <dbReference type="ChEBI" id="CHEBI:194156"/>
        <dbReference type="ChEBI" id="CHEBI:456215"/>
        <dbReference type="EC" id="3.1.3.7"/>
    </reaction>
    <physiologicalReaction direction="left-to-right" evidence="11">
        <dbReference type="Rhea" id="RHEA:77644"/>
    </physiologicalReaction>
</comment>
<comment type="catalytic activity">
    <reaction evidence="2">
        <text>3'-phosphoadenylyl sulfate + H2O = adenosine 5'-phosphosulfate + phosphate</text>
        <dbReference type="Rhea" id="RHEA:77639"/>
        <dbReference type="ChEBI" id="CHEBI:15377"/>
        <dbReference type="ChEBI" id="CHEBI:43474"/>
        <dbReference type="ChEBI" id="CHEBI:58243"/>
        <dbReference type="ChEBI" id="CHEBI:58339"/>
        <dbReference type="EC" id="3.1.3.7"/>
    </reaction>
    <physiologicalReaction direction="left-to-right" evidence="2">
        <dbReference type="Rhea" id="RHEA:77640"/>
    </physiologicalReaction>
</comment>
<comment type="catalytic activity">
    <reaction evidence="4">
        <text>1D-myo-inositol 1,4-bisphosphate + H2O = 1D-myo-inositol 4-phosphate + phosphate</text>
        <dbReference type="Rhea" id="RHEA:15553"/>
        <dbReference type="ChEBI" id="CHEBI:15377"/>
        <dbReference type="ChEBI" id="CHEBI:43474"/>
        <dbReference type="ChEBI" id="CHEBI:58282"/>
        <dbReference type="ChEBI" id="CHEBI:58469"/>
        <dbReference type="EC" id="3.1.3.57"/>
    </reaction>
    <physiologicalReaction direction="left-to-right" evidence="11">
        <dbReference type="Rhea" id="RHEA:15554"/>
    </physiologicalReaction>
</comment>
<comment type="catalytic activity">
    <reaction evidence="2">
        <text>1D-myo-inositol 1,3,4-trisphosphate + H2O = 1D-myo-inositol 3,4-bisphosphate + phosphate</text>
        <dbReference type="Rhea" id="RHEA:70319"/>
        <dbReference type="ChEBI" id="CHEBI:15377"/>
        <dbReference type="ChEBI" id="CHEBI:43474"/>
        <dbReference type="ChEBI" id="CHEBI:58414"/>
        <dbReference type="ChEBI" id="CHEBI:83241"/>
    </reaction>
    <physiologicalReaction direction="left-to-right" evidence="2">
        <dbReference type="Rhea" id="RHEA:70320"/>
    </physiologicalReaction>
</comment>
<comment type="cofactor">
    <cofactor evidence="4">
        <name>Mg(2+)</name>
        <dbReference type="ChEBI" id="CHEBI:18420"/>
    </cofactor>
    <text evidence="5">Binds 3 Mg(2+) ions per subunit.</text>
</comment>
<comment type="activity regulation">
    <text evidence="4">Is very sensitive to inhibition by Li(+) (IC(50)=0.3 mM for hydrolysis of PAP; IC(50)=0.6 mM for hydrolysis of inositol-1,4-bis-phosphate). Is not affected by high Na(+) concentrations.</text>
</comment>
<comment type="biophysicochemical properties">
    <kinetics>
        <KM evidence="4">0.4 uM for 1D-myo-inositol 1,4-bisphosphate</KM>
        <Vmax evidence="4">1.1 umol/min/mg enzyme with adenosine 3',5'-bisphosphate as substrate</Vmax>
        <Vmax evidence="4">0.2 umol/min/mg enzyme with 1D-myo-inositol 1,4-bisphosphate as substrate</Vmax>
        <text evidence="4">KM for adenosine 3',5'-bisphosphate is below 1 uM.</text>
    </kinetics>
</comment>
<comment type="alternative products">
    <event type="alternative splicing"/>
    <isoform>
        <id>O95861-1</id>
        <name>1</name>
        <sequence type="displayed"/>
    </isoform>
    <isoform>
        <id>O95861-2</id>
        <name>2</name>
        <sequence type="described" ref="VSP_009937"/>
    </isoform>
    <isoform>
        <id>O95861-3</id>
        <name>3</name>
        <sequence type="described" ref="VSP_054807"/>
    </isoform>
    <isoform>
        <id>O95861-4</id>
        <name>4</name>
        <sequence type="described" ref="VSP_054808"/>
    </isoform>
</comment>
<comment type="tissue specificity">
    <text evidence="3">Highly expressed in kidney, liver, pancreas and heart. Detected at lower levels in brain, placenta, lung and skeletal muscle.</text>
</comment>
<comment type="miscellaneous">
    <text evidence="11">Since this enzyme is sensitive to subtherapeutic concentrations of lithium, it is a potential target of lithium therapy, which could explain some of the side effects of this therapy.</text>
</comment>
<comment type="similarity">
    <text evidence="10">Belongs to the inositol monophosphatase superfamily.</text>
</comment>
<gene>
    <name type="primary">BPNT1</name>
</gene>
<accession>O95861</accession>
<accession>A8K7C8</accession>
<accession>B4DPS5</accession>
<accession>B4DUS9</accession>
<accession>D3DTA9</accession>
<accession>Q8WVL5</accession>
<accession>Q9UGJ3</accession>